<sequence>MAYSKGVSGTLSDYTHLRTLPALLSVVFVIAGLYQFGGISDVTITWLSNYTLTSTHAMGASIGAYALAFASSETKQFDNYQDFEKVLIAAGPAVILGYEYIQPVTDLINTTSNAGPIAAFVVTVVAWGVAVR</sequence>
<accession>C1JJY2</accession>
<proteinExistence type="evidence at protein level"/>
<reference key="1">
    <citation type="journal article" date="2009" name="Mol. Microbiol.">
        <title>An ssDNA virus infecting archaea: a new lineage of viruses with a membrane envelope.</title>
        <authorList>
            <person name="Pietila M.K."/>
            <person name="Roine E."/>
            <person name="Paulin L."/>
            <person name="Kalkkinen N."/>
            <person name="Bamford D.H."/>
        </authorList>
    </citation>
    <scope>NUCLEOTIDE SEQUENCE [GENOMIC DNA]</scope>
    <scope>PROTEIN SEQUENCE OF 2-15</scope>
</reference>
<reference key="2">
    <citation type="journal article" date="2010" name="J. Virol.">
        <title>The single-stranded DNA genome of novel archaeal virus halorubrum pleomorphic virus 1 is enclosed in the envelope decorated with glycoprotein spikes.</title>
        <authorList>
            <person name="Pietila M.K."/>
            <person name="Laurinavicius S."/>
            <person name="Sund J."/>
            <person name="Roine E."/>
            <person name="Bamford D.H."/>
        </authorList>
    </citation>
    <scope>SUBCELLULAR LOCATION</scope>
    <scope>PROTEIN SEQUENCE OF 2-11 AND 112-118</scope>
</reference>
<evidence type="ECO:0000269" key="1">
    <source>
    </source>
</evidence>
<evidence type="ECO:0000269" key="2">
    <source>
    </source>
</evidence>
<comment type="function">
    <text>Envelope protein that may play a role in host-cell attachment and viral genome entry.</text>
</comment>
<comment type="subcellular location">
    <subcellularLocation>
        <location evidence="2">Virion membrane</location>
        <topology evidence="2">Peripheral membrane protein</topology>
    </subcellularLocation>
</comment>
<dbReference type="EMBL" id="FJ685651">
    <property type="protein sequence ID" value="ACO54898.1"/>
    <property type="molecule type" value="Genomic_DNA"/>
</dbReference>
<dbReference type="RefSeq" id="YP_002791888.1">
    <property type="nucleotide sequence ID" value="NC_012558.1"/>
</dbReference>
<dbReference type="KEGG" id="vg:7755263"/>
<dbReference type="OrthoDB" id="21005at10239"/>
<dbReference type="Proteomes" id="UP000009401">
    <property type="component" value="Genome"/>
</dbReference>
<dbReference type="GO" id="GO:0016020">
    <property type="term" value="C:membrane"/>
    <property type="evidence" value="ECO:0007669"/>
    <property type="project" value="UniProtKB-KW"/>
</dbReference>
<dbReference type="GO" id="GO:0055036">
    <property type="term" value="C:virion membrane"/>
    <property type="evidence" value="ECO:0007669"/>
    <property type="project" value="UniProtKB-SubCell"/>
</dbReference>
<gene>
    <name type="ORF">ORF3</name>
</gene>
<name>MATRX_HAPV1</name>
<organism>
    <name type="scientific">Halorubrum pleomorphic virus 1</name>
    <name type="common">HRPV-1</name>
    <dbReference type="NCBI Taxonomy" id="634168"/>
    <lineage>
        <taxon>Viruses</taxon>
        <taxon>Monodnaviria</taxon>
        <taxon>Trapavirae</taxon>
        <taxon>Saleviricota</taxon>
        <taxon>Huolimaviricetes</taxon>
        <taxon>Haloruvirales</taxon>
        <taxon>Pleolipoviridae</taxon>
        <taxon>Alphapleolipovirus</taxon>
        <taxon>Alphapleolipovirus finnoniense</taxon>
    </lineage>
</organism>
<protein>
    <recommendedName>
        <fullName>Matrix protein</fullName>
        <shortName>Mtrx</shortName>
    </recommendedName>
    <alternativeName>
        <fullName>Virion protein 3</fullName>
        <shortName>VP3</shortName>
    </alternativeName>
</protein>
<keyword id="KW-0903">Direct protein sequencing</keyword>
<keyword id="KW-0472">Membrane</keyword>
<keyword id="KW-1185">Reference proteome</keyword>
<keyword id="KW-0946">Virion</keyword>
<organismHost>
    <name type="scientific">Halorubrum sp. PV6</name>
    <dbReference type="NCBI Taxonomy" id="634157"/>
</organismHost>
<feature type="initiator methionine" description="Removed" evidence="1">
    <location>
        <position position="1"/>
    </location>
</feature>
<feature type="chain" id="PRO_0000420961" description="Matrix protein">
    <location>
        <begin position="2"/>
        <end position="132"/>
    </location>
</feature>